<evidence type="ECO:0000250" key="1"/>
<evidence type="ECO:0000255" key="2"/>
<evidence type="ECO:0000305" key="3"/>
<protein>
    <recommendedName>
        <fullName>Holin-like protein CidA 1</fullName>
    </recommendedName>
</protein>
<feature type="chain" id="PRO_0000213175" description="Holin-like protein CidA 1">
    <location>
        <begin position="1"/>
        <end position="121"/>
    </location>
</feature>
<feature type="transmembrane region" description="Helical" evidence="2">
    <location>
        <begin position="7"/>
        <end position="24"/>
    </location>
</feature>
<feature type="transmembrane region" description="Helical" evidence="2">
    <location>
        <begin position="28"/>
        <end position="50"/>
    </location>
</feature>
<feature type="transmembrane region" description="Helical" evidence="2">
    <location>
        <begin position="62"/>
        <end position="81"/>
    </location>
</feature>
<feature type="transmembrane region" description="Helical" evidence="2">
    <location>
        <begin position="91"/>
        <end position="113"/>
    </location>
</feature>
<keyword id="KW-1003">Cell membrane</keyword>
<keyword id="KW-0204">Cytolysis</keyword>
<keyword id="KW-0472">Membrane</keyword>
<keyword id="KW-1185">Reference proteome</keyword>
<keyword id="KW-0812">Transmembrane</keyword>
<keyword id="KW-1133">Transmembrane helix</keyword>
<name>CIDA1_BACCR</name>
<proteinExistence type="inferred from homology"/>
<gene>
    <name type="primary">cidA1</name>
    <name type="ordered locus">BC_3669</name>
</gene>
<dbReference type="EMBL" id="AE016877">
    <property type="protein sequence ID" value="AAP10598.1"/>
    <property type="molecule type" value="Genomic_DNA"/>
</dbReference>
<dbReference type="RefSeq" id="NP_833397.1">
    <property type="nucleotide sequence ID" value="NC_004722.1"/>
</dbReference>
<dbReference type="RefSeq" id="WP_000872365.1">
    <property type="nucleotide sequence ID" value="NZ_CP138336.1"/>
</dbReference>
<dbReference type="SMR" id="Q81AB0"/>
<dbReference type="STRING" id="226900.BC_3669"/>
<dbReference type="KEGG" id="bce:BC3669"/>
<dbReference type="PATRIC" id="fig|226900.8.peg.3773"/>
<dbReference type="HOGENOM" id="CLU_113736_3_2_9"/>
<dbReference type="OrthoDB" id="3176438at2"/>
<dbReference type="Proteomes" id="UP000001417">
    <property type="component" value="Chromosome"/>
</dbReference>
<dbReference type="GO" id="GO:0005886">
    <property type="term" value="C:plasma membrane"/>
    <property type="evidence" value="ECO:0007669"/>
    <property type="project" value="UniProtKB-SubCell"/>
</dbReference>
<dbReference type="GO" id="GO:0019835">
    <property type="term" value="P:cytolysis"/>
    <property type="evidence" value="ECO:0007669"/>
    <property type="project" value="UniProtKB-UniRule"/>
</dbReference>
<dbReference type="GO" id="GO:0031640">
    <property type="term" value="P:killing of cells of another organism"/>
    <property type="evidence" value="ECO:0007669"/>
    <property type="project" value="UniProtKB-KW"/>
</dbReference>
<dbReference type="GO" id="GO:0012501">
    <property type="term" value="P:programmed cell death"/>
    <property type="evidence" value="ECO:0007669"/>
    <property type="project" value="UniProtKB-UniRule"/>
</dbReference>
<dbReference type="HAMAP" id="MF_01143">
    <property type="entry name" value="CidA"/>
    <property type="match status" value="1"/>
</dbReference>
<dbReference type="InterPro" id="IPR023760">
    <property type="entry name" value="Holin-like_CidA"/>
</dbReference>
<dbReference type="InterPro" id="IPR005538">
    <property type="entry name" value="LrgA/CidA"/>
</dbReference>
<dbReference type="NCBIfam" id="NF002460">
    <property type="entry name" value="PRK01658.1"/>
    <property type="match status" value="1"/>
</dbReference>
<dbReference type="PANTHER" id="PTHR33931:SF2">
    <property type="entry name" value="HOLIN-LIKE PROTEIN CIDA"/>
    <property type="match status" value="1"/>
</dbReference>
<dbReference type="PANTHER" id="PTHR33931">
    <property type="entry name" value="HOLIN-LIKE PROTEIN CIDA-RELATED"/>
    <property type="match status" value="1"/>
</dbReference>
<dbReference type="Pfam" id="PF03788">
    <property type="entry name" value="LrgA"/>
    <property type="match status" value="1"/>
</dbReference>
<organism>
    <name type="scientific">Bacillus cereus (strain ATCC 14579 / DSM 31 / CCUG 7414 / JCM 2152 / NBRC 15305 / NCIMB 9373 / NCTC 2599 / NRRL B-3711)</name>
    <dbReference type="NCBI Taxonomy" id="226900"/>
    <lineage>
        <taxon>Bacteria</taxon>
        <taxon>Bacillati</taxon>
        <taxon>Bacillota</taxon>
        <taxon>Bacilli</taxon>
        <taxon>Bacillales</taxon>
        <taxon>Bacillaceae</taxon>
        <taxon>Bacillus</taxon>
        <taxon>Bacillus cereus group</taxon>
    </lineage>
</organism>
<accession>Q81AB0</accession>
<comment type="function">
    <text evidence="1">Increases the activity of extracellular murein hydrolases possibly by mediating their export via hole formation. Inhibited by the antiholin-like proteins LrgAB. In an unstressed cell, the LrgAB products probably inhibit the function of the CidA protein. When a cell is stressed by the addition of antibiotics or by other factors in the environment, CidA possibly oligomerizes within the bacterial cell membrane, creating lesions that disrupt the proton motive force, which in turn results in loss of cell viability. These lesions are also hypothesized to regulate the subsequent cell lysis by either allowing the murein hydrolases access to the cell wall substrate and/or regulating their activity by a possible change in the cell wall pH that results from loss of membrane potential (By similarity).</text>
</comment>
<comment type="subcellular location">
    <subcellularLocation>
        <location evidence="3">Cell membrane</location>
        <topology evidence="3">Multi-pass membrane protein</topology>
    </subcellularLocation>
</comment>
<comment type="similarity">
    <text evidence="3">Belongs to the CidA/LrgA family. CidA subfamily.</text>
</comment>
<sequence length="121" mass="13779">MKWWKLSGQILLLFCFAWTGEWIAKQAHLPVPGSIIGIFLLLISLKFNLVKKEWIQDGADFLLKELILFFIPSAVAVIRYRDTLTQYGIDLILIIMISTLCVTLVTGLLTELLLKRKGSTQ</sequence>
<reference key="1">
    <citation type="journal article" date="2003" name="Nature">
        <title>Genome sequence of Bacillus cereus and comparative analysis with Bacillus anthracis.</title>
        <authorList>
            <person name="Ivanova N."/>
            <person name="Sorokin A."/>
            <person name="Anderson I."/>
            <person name="Galleron N."/>
            <person name="Candelon B."/>
            <person name="Kapatral V."/>
            <person name="Bhattacharyya A."/>
            <person name="Reznik G."/>
            <person name="Mikhailova N."/>
            <person name="Lapidus A."/>
            <person name="Chu L."/>
            <person name="Mazur M."/>
            <person name="Goltsman E."/>
            <person name="Larsen N."/>
            <person name="D'Souza M."/>
            <person name="Walunas T."/>
            <person name="Grechkin Y."/>
            <person name="Pusch G."/>
            <person name="Haselkorn R."/>
            <person name="Fonstein M."/>
            <person name="Ehrlich S.D."/>
            <person name="Overbeek R."/>
            <person name="Kyrpides N.C."/>
        </authorList>
    </citation>
    <scope>NUCLEOTIDE SEQUENCE [LARGE SCALE GENOMIC DNA]</scope>
    <source>
        <strain>ATCC 14579 / DSM 31 / CCUG 7414 / JCM 2152 / NBRC 15305 / NCIMB 9373 / NCTC 2599 / NRRL B-3711</strain>
    </source>
</reference>